<feature type="signal peptide" evidence="2">
    <location>
        <begin position="1"/>
        <end position="22"/>
    </location>
</feature>
<feature type="chain" id="PRO_0000404080" description="Perlucin-like protein" evidence="2">
    <location>
        <begin position="23"/>
        <end position="156"/>
    </location>
</feature>
<feature type="domain" description="C-type lectin" evidence="3">
    <location>
        <begin position="37"/>
        <end position="156"/>
    </location>
</feature>
<feature type="disulfide bond" evidence="1 3">
    <location>
        <begin position="30"/>
        <end position="41"/>
    </location>
</feature>
<feature type="disulfide bond" evidence="1 3">
    <location>
        <begin position="58"/>
        <end position="156"/>
    </location>
</feature>
<feature type="disulfide bond" evidence="1 3">
    <location>
        <begin position="131"/>
        <end position="147"/>
    </location>
</feature>
<evidence type="ECO:0000250" key="1">
    <source>
        <dbReference type="UniProtKB" id="Q07108"/>
    </source>
</evidence>
<evidence type="ECO:0000255" key="2"/>
<evidence type="ECO:0000255" key="3">
    <source>
        <dbReference type="PROSITE-ProRule" id="PRU00040"/>
    </source>
</evidence>
<evidence type="ECO:0000269" key="4">
    <source>
    </source>
</evidence>
<evidence type="ECO:0000303" key="5">
    <source>
    </source>
</evidence>
<evidence type="ECO:0000305" key="6"/>
<organism>
    <name type="scientific">Mytilus galloprovincialis</name>
    <name type="common">Mediterranean mussel</name>
    <dbReference type="NCBI Taxonomy" id="29158"/>
    <lineage>
        <taxon>Eukaryota</taxon>
        <taxon>Metazoa</taxon>
        <taxon>Spiralia</taxon>
        <taxon>Lophotrochozoa</taxon>
        <taxon>Mollusca</taxon>
        <taxon>Bivalvia</taxon>
        <taxon>Autobranchia</taxon>
        <taxon>Pteriomorphia</taxon>
        <taxon>Mytilida</taxon>
        <taxon>Mytiloidea</taxon>
        <taxon>Mytilidae</taxon>
        <taxon>Mytilinae</taxon>
        <taxon>Mytilus</taxon>
    </lineage>
</organism>
<protein>
    <recommendedName>
        <fullName evidence="5">Perlucin-like protein</fullName>
    </recommendedName>
</protein>
<name>PLCL_MYTGA</name>
<sequence length="156" mass="17781">MGKLTVVGILTLFIFYIVAASGKCTAPVNCPAGWKKYKTNCYFFSPDGKNWHDAAKQCQTMGGYLVKITDSEENSWVVDMITKSVKHKYGYWMGMADLKNEGDWRWVNDSSAVSYSNWHRGQPNNANNEDCGHFWSAVNYEWNDIVCNTDQMGYIC</sequence>
<accession>P86854</accession>
<keyword id="KW-0903">Direct protein sequencing</keyword>
<keyword id="KW-1015">Disulfide bond</keyword>
<keyword id="KW-0430">Lectin</keyword>
<keyword id="KW-0964">Secreted</keyword>
<keyword id="KW-0732">Signal</keyword>
<proteinExistence type="evidence at protein level"/>
<dbReference type="EMBL" id="AJ624413">
    <property type="status" value="NOT_ANNOTATED_CDS"/>
    <property type="molecule type" value="mRNA"/>
</dbReference>
<dbReference type="SMR" id="P86854"/>
<dbReference type="GO" id="GO:0005576">
    <property type="term" value="C:extracellular region"/>
    <property type="evidence" value="ECO:0007669"/>
    <property type="project" value="UniProtKB-SubCell"/>
</dbReference>
<dbReference type="GO" id="GO:0030246">
    <property type="term" value="F:carbohydrate binding"/>
    <property type="evidence" value="ECO:0007669"/>
    <property type="project" value="UniProtKB-KW"/>
</dbReference>
<dbReference type="CDD" id="cd03590">
    <property type="entry name" value="CLECT_DC-SIGN_like"/>
    <property type="match status" value="1"/>
</dbReference>
<dbReference type="Gene3D" id="3.10.100.10">
    <property type="entry name" value="Mannose-Binding Protein A, subunit A"/>
    <property type="match status" value="1"/>
</dbReference>
<dbReference type="InterPro" id="IPR001304">
    <property type="entry name" value="C-type_lectin-like"/>
</dbReference>
<dbReference type="InterPro" id="IPR016186">
    <property type="entry name" value="C-type_lectin-like/link_sf"/>
</dbReference>
<dbReference type="InterPro" id="IPR050111">
    <property type="entry name" value="C-type_lectin/snaclec_domain"/>
</dbReference>
<dbReference type="InterPro" id="IPR018378">
    <property type="entry name" value="C-type_lectin_CS"/>
</dbReference>
<dbReference type="InterPro" id="IPR033989">
    <property type="entry name" value="CD209-like_CTLD"/>
</dbReference>
<dbReference type="InterPro" id="IPR016187">
    <property type="entry name" value="CTDL_fold"/>
</dbReference>
<dbReference type="PANTHER" id="PTHR22803">
    <property type="entry name" value="MANNOSE, PHOSPHOLIPASE, LECTIN RECEPTOR RELATED"/>
    <property type="match status" value="1"/>
</dbReference>
<dbReference type="Pfam" id="PF00059">
    <property type="entry name" value="Lectin_C"/>
    <property type="match status" value="1"/>
</dbReference>
<dbReference type="SMART" id="SM00034">
    <property type="entry name" value="CLECT"/>
    <property type="match status" value="1"/>
</dbReference>
<dbReference type="SUPFAM" id="SSF56436">
    <property type="entry name" value="C-type lectin-like"/>
    <property type="match status" value="1"/>
</dbReference>
<dbReference type="PROSITE" id="PS00615">
    <property type="entry name" value="C_TYPE_LECTIN_1"/>
    <property type="match status" value="1"/>
</dbReference>
<dbReference type="PROSITE" id="PS50041">
    <property type="entry name" value="C_TYPE_LECTIN_2"/>
    <property type="match status" value="1"/>
</dbReference>
<reference evidence="6" key="1">
    <citation type="journal article" date="2006" name="Mutat. Res.">
        <title>Development of mussel mRNA profiling: Can gene expression trends reveal coastal water pollution?</title>
        <authorList>
            <person name="Venier P."/>
            <person name="De Pitta C."/>
            <person name="Pallavicini A."/>
            <person name="Marsano F."/>
            <person name="Varotto L."/>
            <person name="Romualdi C."/>
            <person name="Dondero F."/>
            <person name="Viarengo A."/>
            <person name="Lanfranchi G."/>
        </authorList>
    </citation>
    <scope>NUCLEOTIDE SEQUENCE [MRNA]</scope>
</reference>
<reference evidence="6" key="2">
    <citation type="journal article" date="2011" name="J. Mol. Evol.">
        <title>Molecular evolution of mollusc shell proteins: insights from proteomic analysis of the edible mussel mytilus.</title>
        <authorList>
            <person name="Marie B."/>
            <person name="Le Roy N."/>
            <person name="Zanella-Cleon I."/>
            <person name="Becchi M."/>
            <person name="Marin F."/>
        </authorList>
    </citation>
    <scope>PROTEIN SEQUENCE OF 57-67 AND 89-99</scope>
    <scope>SUBCELLULAR LOCATION</scope>
    <scope>TISSUE SPECIFICITY</scope>
    <source>
        <tissue evidence="4">Shell</tissue>
    </source>
</reference>
<comment type="subcellular location">
    <subcellularLocation>
        <location evidence="4">Secreted</location>
    </subcellularLocation>
</comment>
<comment type="tissue specificity">
    <text evidence="4">Component of the organic matrix of calcified shell layers like nacre and prisms.</text>
</comment>